<proteinExistence type="evidence at protein level"/>
<reference key="1">
    <citation type="journal article" date="1990" name="EMBO J.">
        <title>Protein secretion in Gram-negative bacteria: transport across the outer membrane involves common mechanisms in different bacteria.</title>
        <authorList>
            <person name="Filloux A."/>
            <person name="Bally M."/>
            <person name="Ball G."/>
            <person name="Akrim M."/>
            <person name="Tommassen J."/>
            <person name="Lazdunski A."/>
        </authorList>
    </citation>
    <scope>NUCLEOTIDE SEQUENCE [GENOMIC DNA]</scope>
</reference>
<reference key="2">
    <citation type="journal article" date="2000" name="Nature">
        <title>Complete genome sequence of Pseudomonas aeruginosa PAO1, an opportunistic pathogen.</title>
        <authorList>
            <person name="Stover C.K."/>
            <person name="Pham X.-Q.T."/>
            <person name="Erwin A.L."/>
            <person name="Mizoguchi S.D."/>
            <person name="Warrener P."/>
            <person name="Hickey M.J."/>
            <person name="Brinkman F.S.L."/>
            <person name="Hufnagle W.O."/>
            <person name="Kowalik D.J."/>
            <person name="Lagrou M."/>
            <person name="Garber R.L."/>
            <person name="Goltry L."/>
            <person name="Tolentino E."/>
            <person name="Westbrock-Wadman S."/>
            <person name="Yuan Y."/>
            <person name="Brody L.L."/>
            <person name="Coulter S.N."/>
            <person name="Folger K.R."/>
            <person name="Kas A."/>
            <person name="Larbig K."/>
            <person name="Lim R.M."/>
            <person name="Smith K.A."/>
            <person name="Spencer D.H."/>
            <person name="Wong G.K.-S."/>
            <person name="Wu Z."/>
            <person name="Paulsen I.T."/>
            <person name="Reizer J."/>
            <person name="Saier M.H. Jr."/>
            <person name="Hancock R.E.W."/>
            <person name="Lory S."/>
            <person name="Olson M.V."/>
        </authorList>
    </citation>
    <scope>NUCLEOTIDE SEQUENCE [LARGE SCALE GENOMIC DNA]</scope>
    <source>
        <strain>ATCC 15692 / DSM 22644 / CIP 104116 / JCM 14847 / LMG 12228 / 1C / PRS 101 / PAO1</strain>
    </source>
</reference>
<reference key="3">
    <citation type="journal article" date="1996" name="J. Bacteriol.">
        <title>Membrane topology of three Xcp proteins involved in exoprotein transport by Pseudomonas aeruginosa.</title>
        <authorList>
            <person name="Bleves S."/>
            <person name="Lazdunski A."/>
            <person name="Filloux A."/>
        </authorList>
    </citation>
    <scope>TOPOLOGY</scope>
    <scope>SUBCELLULAR LOCATION</scope>
</reference>
<reference key="4">
    <citation type="journal article" date="1998" name="Microbiology">
        <title>Mutual stabilization of the XcpZ and XcpY components of the secretory apparatus in Pseudomonas aeruginosa.</title>
        <authorList>
            <person name="Michel G."/>
            <person name="Bleves S."/>
            <person name="Ball G."/>
            <person name="Lazdunski A."/>
            <person name="Filloux A."/>
        </authorList>
    </citation>
    <scope>DISRUPTION PHENOTYPE</scope>
    <scope>INTERACTION WITH XCPY</scope>
    <scope>FUNCTION</scope>
    <source>
        <strain>ATCC 15692 / DSM 22644 / CIP 104116 / JCM 14847 / LMG 12228 / 1C / PRS 101 / PAO1</strain>
    </source>
</reference>
<reference key="5">
    <citation type="journal article" date="2002" name="J. Bacteriol.">
        <title>Identification of XcpZ domains required for assembly of the secreton of Pseudomonas aeruginosa.</title>
        <authorList>
            <person name="Robert V."/>
            <person name="Hayes F."/>
            <person name="Lazdunski A."/>
            <person name="Michel G.P."/>
        </authorList>
    </citation>
    <scope>FUNCTION</scope>
    <scope>DOMAIN</scope>
    <scope>INTERACTION WITH XCPY</scope>
</reference>
<reference key="6">
    <citation type="journal article" date="2005" name="FEMS Microbiol. Lett.">
        <title>Subcomplexes from the Xcp secretion system of Pseudomonas aeruginosa.</title>
        <authorList>
            <person name="Robert V."/>
            <person name="Filloux A."/>
            <person name="Michel G.P."/>
        </authorList>
    </citation>
    <scope>INTERACTION WITH XCPY; XCPR AND XCPS</scope>
</reference>
<reference key="7">
    <citation type="journal article" date="2018" name="J. Biol. Chem.">
        <title>Direct interactions between the secreted effector and the T2SS components GspL and GspM reveal a new effector-sensing step during type 2 secretion.</title>
        <authorList>
            <person name="Michel-Souzy S."/>
            <person name="Douzi B."/>
            <person name="Cadoret F."/>
            <person name="Raynaud C."/>
            <person name="Quinton L."/>
            <person name="Ball G."/>
            <person name="Voulhoux R."/>
        </authorList>
    </citation>
    <scope>FUNCTION</scope>
    <scope>INTERACTION WITH XCPY</scope>
</reference>
<name>GSPM_PSEAE</name>
<organism>
    <name type="scientific">Pseudomonas aeruginosa (strain ATCC 15692 / DSM 22644 / CIP 104116 / JCM 14847 / LMG 12228 / 1C / PRS 101 / PAO1)</name>
    <dbReference type="NCBI Taxonomy" id="208964"/>
    <lineage>
        <taxon>Bacteria</taxon>
        <taxon>Pseudomonadati</taxon>
        <taxon>Pseudomonadota</taxon>
        <taxon>Gammaproteobacteria</taxon>
        <taxon>Pseudomonadales</taxon>
        <taxon>Pseudomonadaceae</taxon>
        <taxon>Pseudomonas</taxon>
    </lineage>
</organism>
<accession>P25061</accession>
<keyword id="KW-0997">Cell inner membrane</keyword>
<keyword id="KW-1003">Cell membrane</keyword>
<keyword id="KW-0472">Membrane</keyword>
<keyword id="KW-0653">Protein transport</keyword>
<keyword id="KW-1185">Reference proteome</keyword>
<keyword id="KW-0812">Transmembrane</keyword>
<keyword id="KW-1133">Transmembrane helix</keyword>
<keyword id="KW-0813">Transport</keyword>
<feature type="chain" id="PRO_0000207327" description="Type II secretion system protein M">
    <location>
        <begin position="1"/>
        <end position="174"/>
    </location>
</feature>
<feature type="topological domain" description="Cytoplasmic" evidence="6">
    <location>
        <begin position="1"/>
        <end position="32"/>
    </location>
</feature>
<feature type="transmembrane region" description="Helical" evidence="6">
    <location>
        <begin position="33"/>
        <end position="52"/>
    </location>
</feature>
<feature type="topological domain" description="Periplasmic" evidence="6">
    <location>
        <begin position="53"/>
        <end position="174"/>
    </location>
</feature>
<dbReference type="EMBL" id="X56183">
    <property type="protein sequence ID" value="CAA39645.1"/>
    <property type="molecule type" value="Genomic_DNA"/>
</dbReference>
<dbReference type="EMBL" id="AE004091">
    <property type="protein sequence ID" value="AAG06483.1"/>
    <property type="molecule type" value="Genomic_DNA"/>
</dbReference>
<dbReference type="PIR" id="G83257">
    <property type="entry name" value="G83257"/>
</dbReference>
<dbReference type="PIR" id="S12356">
    <property type="entry name" value="S12356"/>
</dbReference>
<dbReference type="RefSeq" id="NP_251785.1">
    <property type="nucleotide sequence ID" value="NC_002516.2"/>
</dbReference>
<dbReference type="RefSeq" id="WP_003091369.1">
    <property type="nucleotide sequence ID" value="NZ_QZGE01000009.1"/>
</dbReference>
<dbReference type="SMR" id="P25061"/>
<dbReference type="FunCoup" id="P25061">
    <property type="interactions" value="51"/>
</dbReference>
<dbReference type="STRING" id="208964.PA3095"/>
<dbReference type="PaxDb" id="208964-PA3095"/>
<dbReference type="DNASU" id="882766"/>
<dbReference type="GeneID" id="882766"/>
<dbReference type="KEGG" id="pae:PA3095"/>
<dbReference type="PATRIC" id="fig|208964.12.peg.3247"/>
<dbReference type="PseudoCAP" id="PA3095"/>
<dbReference type="HOGENOM" id="CLU_118900_2_1_6"/>
<dbReference type="InParanoid" id="P25061"/>
<dbReference type="OrthoDB" id="7013123at2"/>
<dbReference type="BioCyc" id="PAER208964:G1FZ6-3151-MONOMER"/>
<dbReference type="Proteomes" id="UP000002438">
    <property type="component" value="Chromosome"/>
</dbReference>
<dbReference type="GO" id="GO:0005886">
    <property type="term" value="C:plasma membrane"/>
    <property type="evidence" value="ECO:0007669"/>
    <property type="project" value="UniProtKB-SubCell"/>
</dbReference>
<dbReference type="GO" id="GO:0015627">
    <property type="term" value="C:type II protein secretion system complex"/>
    <property type="evidence" value="ECO:0000314"/>
    <property type="project" value="PseudoCAP"/>
</dbReference>
<dbReference type="GO" id="GO:0015628">
    <property type="term" value="P:protein secretion by the type II secretion system"/>
    <property type="evidence" value="ECO:0000314"/>
    <property type="project" value="PseudoCAP"/>
</dbReference>
<dbReference type="Gene3D" id="3.30.1360.100">
    <property type="entry name" value="General secretion pathway protein M, EpsM"/>
    <property type="match status" value="1"/>
</dbReference>
<dbReference type="InterPro" id="IPR007690">
    <property type="entry name" value="T2SS_GspM"/>
</dbReference>
<dbReference type="InterPro" id="IPR023229">
    <property type="entry name" value="T2SS_M_periplasmic_sf"/>
</dbReference>
<dbReference type="Pfam" id="PF04612">
    <property type="entry name" value="T2SSM"/>
    <property type="match status" value="1"/>
</dbReference>
<dbReference type="PIRSF" id="PIRSF006291">
    <property type="entry name" value="GspM"/>
    <property type="match status" value="1"/>
</dbReference>
<dbReference type="SUPFAM" id="SSF103054">
    <property type="entry name" value="General secretion pathway protein M, EpsM"/>
    <property type="match status" value="1"/>
</dbReference>
<gene>
    <name type="primary">xcpZ</name>
    <name type="ordered locus">PA3095</name>
</gene>
<evidence type="ECO:0000250" key="1">
    <source>
        <dbReference type="UniProtKB" id="P41851"/>
    </source>
</evidence>
<evidence type="ECO:0000250" key="2">
    <source>
        <dbReference type="UniProtKB" id="Q00514"/>
    </source>
</evidence>
<evidence type="ECO:0000269" key="3">
    <source>
    </source>
</evidence>
<evidence type="ECO:0000269" key="4">
    <source>
    </source>
</evidence>
<evidence type="ECO:0000269" key="5">
    <source>
    </source>
</evidence>
<evidence type="ECO:0000269" key="6">
    <source>
    </source>
</evidence>
<evidence type="ECO:0000269" key="7">
    <source>
    </source>
</evidence>
<evidence type="ECO:0000305" key="8"/>
<protein>
    <recommendedName>
        <fullName>Type II secretion system protein M</fullName>
        <shortName>T2SS protein M</shortName>
    </recommendedName>
    <alternativeName>
        <fullName>General secretion pathway protein M</fullName>
    </alternativeName>
</protein>
<sequence length="174" mass="19265">MKVMTQFHERLRAQAETSQLAIRWRGLPARDRLALLWLGAFLLLVVLYLALWRPAERHLQSARQYFTEQRALHAYIQQQAPNVRQADAAAPQAQIDPAALQGMVTASAAQAGLSVERLDNEGEGAVQVALQPAPFAKLLPWLEQLNGQGVQVAEAGLDRQVDGRVSARLSLRVE</sequence>
<comment type="function">
    <text evidence="3 5 7">Inner membrane component of the type II secretion system required for the energy-dependent secretion of extracellular factors such as proteases and toxins from the periplasm. Plays a role in the complex assembly and recruits XcpY resulting in a stable complex in the inner membrane. Provides thus a link between the energy-providing XcpR protein in the cytoplasm and the rest of the T2SS machinery.</text>
</comment>
<comment type="subunit">
    <text evidence="1 2 3 4 5 7">Type II secretion system is composed of four main components: the outer membrane complex, the inner membrane complex, the cytoplasmic secretion ATPase and the periplasm-spanning pseudopilus (By similarity). Forms homodimers (By similarity). Interacts with XcpY/GspL (PubMed:11872731, PubMed:16168578, PubMed:30337370, PubMed:9884230). Interacts with XcpR/GspE and XcpS/GspF (PubMed:16168578).</text>
</comment>
<comment type="subcellular location">
    <subcellularLocation>
        <location evidence="6">Cell inner membrane</location>
        <topology evidence="6">Single-pass membrane protein</topology>
    </subcellularLocation>
</comment>
<comment type="domain">
    <text evidence="3">Two distinct periplasmic domains, one located in the proximity of the transmembrane domain and the other located towards the C-terminal part of the protein are both involved in the interaction with XcpY.</text>
</comment>
<comment type="disruption phenotype">
    <text evidence="7">Absence of XcpZ results in decreased amount of XcpY in type II secretion system complexes.</text>
</comment>
<comment type="similarity">
    <text evidence="8">Belongs to the GSP M family.</text>
</comment>